<reference key="1">
    <citation type="submission" date="1998-04" db="EMBL/GenBank/DDBJ databases">
        <title>Expression of edg2 (G10 maternal RNA homologue) in hepatic stellate cells from cirrhotic liver.</title>
        <authorList>
            <person name="D'Amico T."/>
            <person name="Greenwel P."/>
            <person name="Ogata I."/>
            <person name="Rojkind M."/>
        </authorList>
    </citation>
    <scope>NUCLEOTIDE SEQUENCE [MRNA]</scope>
    <source>
        <strain>Wistar</strain>
        <tissue>Liver</tissue>
    </source>
</reference>
<reference key="2">
    <citation type="journal article" date="2004" name="Genome Res.">
        <title>The status, quality, and expansion of the NIH full-length cDNA project: the Mammalian Gene Collection (MGC).</title>
        <authorList>
            <consortium name="The MGC Project Team"/>
        </authorList>
    </citation>
    <scope>NUCLEOTIDE SEQUENCE [LARGE SCALE MRNA]</scope>
    <source>
        <tissue>Pituitary</tissue>
    </source>
</reference>
<accession>O70454</accession>
<accession>Q6PDW3</accession>
<organism>
    <name type="scientific">Rattus norvegicus</name>
    <name type="common">Rat</name>
    <dbReference type="NCBI Taxonomy" id="10116"/>
    <lineage>
        <taxon>Eukaryota</taxon>
        <taxon>Metazoa</taxon>
        <taxon>Chordata</taxon>
        <taxon>Craniata</taxon>
        <taxon>Vertebrata</taxon>
        <taxon>Euteleostomi</taxon>
        <taxon>Mammalia</taxon>
        <taxon>Eutheria</taxon>
        <taxon>Euarchontoglires</taxon>
        <taxon>Glires</taxon>
        <taxon>Rodentia</taxon>
        <taxon>Myomorpha</taxon>
        <taxon>Muroidea</taxon>
        <taxon>Muridae</taxon>
        <taxon>Murinae</taxon>
        <taxon>Rattus</taxon>
    </lineage>
</organism>
<name>BUD31_RAT</name>
<proteinExistence type="evidence at transcript level"/>
<comment type="function">
    <text evidence="1">Involved in the pre-mRNA splicing process. May play a role as regulator of AR transcriptional activity; may increase AR transcriptional activity.</text>
</comment>
<comment type="subunit">
    <text evidence="1">Identified in the spliceosome C complex. May interact with AR.</text>
</comment>
<comment type="subcellular location">
    <subcellularLocation>
        <location evidence="1">Nucleus</location>
    </subcellularLocation>
    <text evidence="1">Detected in chromatin at the promoter of AR target genes.</text>
</comment>
<comment type="domain">
    <text evidence="1">Contains a short sequence motif (Phe-Xaa-Xaa-Phe-Tyr) that can bind to AR and may modulate AR activity.</text>
</comment>
<comment type="similarity">
    <text evidence="3">Belongs to the BUD31 (G10) family.</text>
</comment>
<sequence>MPKVKRSRKAPPDGWELIEPTLDELDQKMREAETEPHEGKRKVESLWPIFRIHHQKTRYIFDLFYKRKAISRELYEYCIKEGYADKNLIAKWKKQGYENLCCLRCIQTRDTNFGTNCICRVPKSKLEVGRIIECTHCGCRGCSG</sequence>
<keyword id="KW-0007">Acetylation</keyword>
<keyword id="KW-0507">mRNA processing</keyword>
<keyword id="KW-0508">mRNA splicing</keyword>
<keyword id="KW-0539">Nucleus</keyword>
<keyword id="KW-1185">Reference proteome</keyword>
<keyword id="KW-0747">Spliceosome</keyword>
<evidence type="ECO:0000250" key="1">
    <source>
        <dbReference type="UniProtKB" id="P41223"/>
    </source>
</evidence>
<evidence type="ECO:0000255" key="2"/>
<evidence type="ECO:0000305" key="3"/>
<protein>
    <recommendedName>
        <fullName>Protein BUD31 homolog</fullName>
    </recommendedName>
    <alternativeName>
        <fullName>Protein EDG-2</fullName>
    </alternativeName>
    <alternativeName>
        <fullName>Protein G10 homolog</fullName>
    </alternativeName>
</protein>
<feature type="chain" id="PRO_0000193898" description="Protein BUD31 homolog">
    <location>
        <begin position="1"/>
        <end position="144"/>
    </location>
</feature>
<feature type="region of interest" description="Interaction with AR" evidence="1">
    <location>
        <begin position="59"/>
        <end position="67"/>
    </location>
</feature>
<feature type="short sequence motif" description="Nuclear localization signal" evidence="2">
    <location>
        <begin position="2"/>
        <end position="10"/>
    </location>
</feature>
<feature type="modified residue" description="N6-acetyllysine" evidence="1">
    <location>
        <position position="125"/>
    </location>
</feature>
<feature type="sequence conflict" description="In Ref. 1; AAC14190." evidence="3" ref="1">
    <original>E</original>
    <variation>D</variation>
    <location>
        <position position="133"/>
    </location>
</feature>
<feature type="sequence conflict" description="In Ref. 1; AAC14190." evidence="3" ref="1">
    <original>C</original>
    <variation>W</variation>
    <location>
        <position position="142"/>
    </location>
</feature>
<gene>
    <name type="primary">Bud31</name>
    <name type="synonym">Edg2</name>
    <name type="synonym">G10</name>
</gene>
<dbReference type="EMBL" id="AF058791">
    <property type="protein sequence ID" value="AAC14190.1"/>
    <property type="molecule type" value="mRNA"/>
</dbReference>
<dbReference type="EMBL" id="BC058456">
    <property type="protein sequence ID" value="AAH58456.1"/>
    <property type="molecule type" value="mRNA"/>
</dbReference>
<dbReference type="RefSeq" id="NP_446008.2">
    <property type="nucleotide sequence ID" value="NM_053556.2"/>
</dbReference>
<dbReference type="RefSeq" id="XP_006248949.1">
    <property type="nucleotide sequence ID" value="XM_006248887.4"/>
</dbReference>
<dbReference type="RefSeq" id="XP_006248951.1">
    <property type="nucleotide sequence ID" value="XM_006248889.4"/>
</dbReference>
<dbReference type="RefSeq" id="XP_008767225.1">
    <property type="nucleotide sequence ID" value="XM_008769003.1"/>
</dbReference>
<dbReference type="RefSeq" id="XP_038945772.1">
    <property type="nucleotide sequence ID" value="XM_039089844.2"/>
</dbReference>
<dbReference type="RefSeq" id="XP_038945773.1">
    <property type="nucleotide sequence ID" value="XM_039089845.2"/>
</dbReference>
<dbReference type="RefSeq" id="XP_038945774.1">
    <property type="nucleotide sequence ID" value="XM_039089846.2"/>
</dbReference>
<dbReference type="RefSeq" id="XP_063127791.1">
    <property type="nucleotide sequence ID" value="XM_063271721.1"/>
</dbReference>
<dbReference type="RefSeq" id="XP_063127793.1">
    <property type="nucleotide sequence ID" value="XM_063271723.1"/>
</dbReference>
<dbReference type="RefSeq" id="XP_063127794.1">
    <property type="nucleotide sequence ID" value="XM_063271724.1"/>
</dbReference>
<dbReference type="SMR" id="O70454"/>
<dbReference type="FunCoup" id="O70454">
    <property type="interactions" value="3584"/>
</dbReference>
<dbReference type="STRING" id="10116.ENSRNOP00000001307"/>
<dbReference type="iPTMnet" id="O70454"/>
<dbReference type="PhosphoSitePlus" id="O70454"/>
<dbReference type="jPOST" id="O70454"/>
<dbReference type="PaxDb" id="10116-ENSRNOP00000001307"/>
<dbReference type="Ensembl" id="ENSRNOT00000001307.8">
    <property type="protein sequence ID" value="ENSRNOP00000001307.4"/>
    <property type="gene ID" value="ENSRNOG00000000989.9"/>
</dbReference>
<dbReference type="GeneID" id="89819"/>
<dbReference type="KEGG" id="rno:89819"/>
<dbReference type="AGR" id="RGD:621103"/>
<dbReference type="CTD" id="8896"/>
<dbReference type="RGD" id="621103">
    <property type="gene designation" value="Bud31"/>
</dbReference>
<dbReference type="eggNOG" id="KOG3404">
    <property type="taxonomic scope" value="Eukaryota"/>
</dbReference>
<dbReference type="GeneTree" id="ENSGT00390000014300"/>
<dbReference type="InParanoid" id="O70454"/>
<dbReference type="OMA" id="FGTSCIC"/>
<dbReference type="OrthoDB" id="277109at2759"/>
<dbReference type="PhylomeDB" id="O70454"/>
<dbReference type="TreeFam" id="TF105609"/>
<dbReference type="Reactome" id="R-RNO-72163">
    <property type="pathway name" value="mRNA Splicing - Major Pathway"/>
</dbReference>
<dbReference type="PRO" id="PR:O70454"/>
<dbReference type="Proteomes" id="UP000002494">
    <property type="component" value="Chromosome 12"/>
</dbReference>
<dbReference type="Bgee" id="ENSRNOG00000000989">
    <property type="expression patterns" value="Expressed in thymus and 20 other cell types or tissues"/>
</dbReference>
<dbReference type="ExpressionAtlas" id="O70454">
    <property type="expression patterns" value="baseline and differential"/>
</dbReference>
<dbReference type="GO" id="GO:0005813">
    <property type="term" value="C:centrosome"/>
    <property type="evidence" value="ECO:0007669"/>
    <property type="project" value="Ensembl"/>
</dbReference>
<dbReference type="GO" id="GO:0000785">
    <property type="term" value="C:chromatin"/>
    <property type="evidence" value="ECO:0000250"/>
    <property type="project" value="UniProtKB"/>
</dbReference>
<dbReference type="GO" id="GO:0005654">
    <property type="term" value="C:nucleoplasm"/>
    <property type="evidence" value="ECO:0007669"/>
    <property type="project" value="Ensembl"/>
</dbReference>
<dbReference type="GO" id="GO:0005634">
    <property type="term" value="C:nucleus"/>
    <property type="evidence" value="ECO:0000266"/>
    <property type="project" value="RGD"/>
</dbReference>
<dbReference type="GO" id="GO:0005681">
    <property type="term" value="C:spliceosomal complex"/>
    <property type="evidence" value="ECO:0000318"/>
    <property type="project" value="GO_Central"/>
</dbReference>
<dbReference type="GO" id="GO:0071007">
    <property type="term" value="C:U2-type catalytic step 2 spliceosome"/>
    <property type="evidence" value="ECO:0000266"/>
    <property type="project" value="RGD"/>
</dbReference>
<dbReference type="GO" id="GO:0016922">
    <property type="term" value="F:nuclear receptor binding"/>
    <property type="evidence" value="ECO:0000250"/>
    <property type="project" value="UniProtKB"/>
</dbReference>
<dbReference type="GO" id="GO:0003713">
    <property type="term" value="F:transcription coactivator activity"/>
    <property type="evidence" value="ECO:0000250"/>
    <property type="project" value="UniProtKB"/>
</dbReference>
<dbReference type="GO" id="GO:0000398">
    <property type="term" value="P:mRNA splicing, via spliceosome"/>
    <property type="evidence" value="ECO:0000266"/>
    <property type="project" value="RGD"/>
</dbReference>
<dbReference type="InterPro" id="IPR001748">
    <property type="entry name" value="BUD31"/>
</dbReference>
<dbReference type="InterPro" id="IPR018230">
    <property type="entry name" value="BUD31/G10-rel_CS"/>
</dbReference>
<dbReference type="PANTHER" id="PTHR19411:SF0">
    <property type="entry name" value="PROTEIN BUD31 HOMOLOG"/>
    <property type="match status" value="1"/>
</dbReference>
<dbReference type="PANTHER" id="PTHR19411">
    <property type="entry name" value="PROTEIN BUD31-RELATED"/>
    <property type="match status" value="1"/>
</dbReference>
<dbReference type="Pfam" id="PF01125">
    <property type="entry name" value="BUD31"/>
    <property type="match status" value="1"/>
</dbReference>
<dbReference type="PRINTS" id="PR00322">
    <property type="entry name" value="G10"/>
</dbReference>
<dbReference type="PROSITE" id="PS00997">
    <property type="entry name" value="G10_1"/>
    <property type="match status" value="1"/>
</dbReference>
<dbReference type="PROSITE" id="PS00998">
    <property type="entry name" value="G10_2"/>
    <property type="match status" value="1"/>
</dbReference>